<keyword id="KW-0227">DNA damage</keyword>
<keyword id="KW-0233">DNA recombination</keyword>
<keyword id="KW-0234">DNA repair</keyword>
<keyword id="KW-1185">Reference proteome</keyword>
<accession>B1YL74</accession>
<sequence length="249" mass="27992">MIDKAEGLVLRTVVYGESNKIITLLTREYGKLAVMARGAKKPGSRFNAASQPFVRAIYVYPRSRGLGQLKSADVITGYSKIRQDVFLMAYAMYLLELADKALDERVPQPALYDLFVDGLEAMDEGLDPDVVSFIVELRLLRHLGIAPHLNGCTVCGSVEAPFAFSLNHGGLLCRRHRQEDEHAVSLTESVAKMLYVFSVYDFSRIGTVDVKPETKRLLRQIMDAYMERYSGLRLRSKRVLDQLLNLGDD</sequence>
<dbReference type="EMBL" id="CP001022">
    <property type="protein sequence ID" value="ACB60306.1"/>
    <property type="molecule type" value="Genomic_DNA"/>
</dbReference>
<dbReference type="RefSeq" id="WP_012369730.1">
    <property type="nucleotide sequence ID" value="NC_010556.1"/>
</dbReference>
<dbReference type="SMR" id="B1YL74"/>
<dbReference type="STRING" id="262543.Exig_0826"/>
<dbReference type="KEGG" id="esi:Exig_0826"/>
<dbReference type="eggNOG" id="COG1381">
    <property type="taxonomic scope" value="Bacteria"/>
</dbReference>
<dbReference type="HOGENOM" id="CLU_066632_4_0_9"/>
<dbReference type="OrthoDB" id="9797083at2"/>
<dbReference type="Proteomes" id="UP000001681">
    <property type="component" value="Chromosome"/>
</dbReference>
<dbReference type="GO" id="GO:0043590">
    <property type="term" value="C:bacterial nucleoid"/>
    <property type="evidence" value="ECO:0007669"/>
    <property type="project" value="TreeGrafter"/>
</dbReference>
<dbReference type="GO" id="GO:0006310">
    <property type="term" value="P:DNA recombination"/>
    <property type="evidence" value="ECO:0007669"/>
    <property type="project" value="UniProtKB-UniRule"/>
</dbReference>
<dbReference type="GO" id="GO:0006302">
    <property type="term" value="P:double-strand break repair"/>
    <property type="evidence" value="ECO:0007669"/>
    <property type="project" value="TreeGrafter"/>
</dbReference>
<dbReference type="Gene3D" id="2.40.50.140">
    <property type="entry name" value="Nucleic acid-binding proteins"/>
    <property type="match status" value="1"/>
</dbReference>
<dbReference type="Gene3D" id="1.20.1440.120">
    <property type="entry name" value="Recombination protein O, C-terminal domain"/>
    <property type="match status" value="1"/>
</dbReference>
<dbReference type="HAMAP" id="MF_00201">
    <property type="entry name" value="RecO"/>
    <property type="match status" value="1"/>
</dbReference>
<dbReference type="InterPro" id="IPR037278">
    <property type="entry name" value="ARFGAP/RecO"/>
</dbReference>
<dbReference type="InterPro" id="IPR022572">
    <property type="entry name" value="DNA_rep/recomb_RecO_N"/>
</dbReference>
<dbReference type="InterPro" id="IPR012340">
    <property type="entry name" value="NA-bd_OB-fold"/>
</dbReference>
<dbReference type="InterPro" id="IPR003717">
    <property type="entry name" value="RecO"/>
</dbReference>
<dbReference type="InterPro" id="IPR042242">
    <property type="entry name" value="RecO_C"/>
</dbReference>
<dbReference type="NCBIfam" id="TIGR00613">
    <property type="entry name" value="reco"/>
    <property type="match status" value="1"/>
</dbReference>
<dbReference type="PANTHER" id="PTHR33991">
    <property type="entry name" value="DNA REPAIR PROTEIN RECO"/>
    <property type="match status" value="1"/>
</dbReference>
<dbReference type="PANTHER" id="PTHR33991:SF1">
    <property type="entry name" value="DNA REPAIR PROTEIN RECO"/>
    <property type="match status" value="1"/>
</dbReference>
<dbReference type="Pfam" id="PF02565">
    <property type="entry name" value="RecO_C"/>
    <property type="match status" value="1"/>
</dbReference>
<dbReference type="Pfam" id="PF11967">
    <property type="entry name" value="RecO_N"/>
    <property type="match status" value="1"/>
</dbReference>
<dbReference type="SUPFAM" id="SSF57863">
    <property type="entry name" value="ArfGap/RecO-like zinc finger"/>
    <property type="match status" value="1"/>
</dbReference>
<dbReference type="SUPFAM" id="SSF50249">
    <property type="entry name" value="Nucleic acid-binding proteins"/>
    <property type="match status" value="1"/>
</dbReference>
<gene>
    <name evidence="1" type="primary">recO</name>
    <name type="ordered locus">Exig_0826</name>
</gene>
<organism>
    <name type="scientific">Exiguobacterium sibiricum (strain DSM 17290 / CCUG 55495 / CIP 109462 / JCM 13490 / 255-15)</name>
    <dbReference type="NCBI Taxonomy" id="262543"/>
    <lineage>
        <taxon>Bacteria</taxon>
        <taxon>Bacillati</taxon>
        <taxon>Bacillota</taxon>
        <taxon>Bacilli</taxon>
        <taxon>Bacillales</taxon>
        <taxon>Bacillales Family XII. Incertae Sedis</taxon>
        <taxon>Exiguobacterium</taxon>
    </lineage>
</organism>
<reference key="1">
    <citation type="submission" date="2008-04" db="EMBL/GenBank/DDBJ databases">
        <title>Complete sequence of chromosome of Exiguobacterium sibiricum 255-15.</title>
        <authorList>
            <consortium name="US DOE Joint Genome Institute"/>
            <person name="Copeland A."/>
            <person name="Lucas S."/>
            <person name="Lapidus A."/>
            <person name="Glavina del Rio T."/>
            <person name="Dalin E."/>
            <person name="Tice H."/>
            <person name="Bruce D."/>
            <person name="Goodwin L."/>
            <person name="Pitluck S."/>
            <person name="Kiss H."/>
            <person name="Chertkov O."/>
            <person name="Monk C."/>
            <person name="Brettin T."/>
            <person name="Detter J.C."/>
            <person name="Han C."/>
            <person name="Kuske C.R."/>
            <person name="Schmutz J."/>
            <person name="Larimer F."/>
            <person name="Land M."/>
            <person name="Hauser L."/>
            <person name="Kyrpides N."/>
            <person name="Mikhailova N."/>
            <person name="Vishnivetskaya T."/>
            <person name="Rodrigues D.F."/>
            <person name="Gilichinsky D."/>
            <person name="Tiedje J."/>
            <person name="Richardson P."/>
        </authorList>
    </citation>
    <scope>NUCLEOTIDE SEQUENCE [LARGE SCALE GENOMIC DNA]</scope>
    <source>
        <strain>DSM 17290 / CCUG 55495 / CIP 109462 / JCM 13490 / 255-15</strain>
    </source>
</reference>
<protein>
    <recommendedName>
        <fullName evidence="1">DNA repair protein RecO</fullName>
    </recommendedName>
    <alternativeName>
        <fullName evidence="1">Recombination protein O</fullName>
    </alternativeName>
</protein>
<proteinExistence type="inferred from homology"/>
<evidence type="ECO:0000255" key="1">
    <source>
        <dbReference type="HAMAP-Rule" id="MF_00201"/>
    </source>
</evidence>
<feature type="chain" id="PRO_1000099382" description="DNA repair protein RecO">
    <location>
        <begin position="1"/>
        <end position="249"/>
    </location>
</feature>
<comment type="function">
    <text evidence="1">Involved in DNA repair and RecF pathway recombination.</text>
</comment>
<comment type="similarity">
    <text evidence="1">Belongs to the RecO family.</text>
</comment>
<name>RECO_EXIS2</name>